<protein>
    <recommendedName>
        <fullName evidence="1">Succinylglutamate desuccinylase</fullName>
        <ecNumber evidence="1">3.5.1.96</ecNumber>
    </recommendedName>
</protein>
<organism>
    <name type="scientific">Shewanella amazonensis (strain ATCC BAA-1098 / SB2B)</name>
    <dbReference type="NCBI Taxonomy" id="326297"/>
    <lineage>
        <taxon>Bacteria</taxon>
        <taxon>Pseudomonadati</taxon>
        <taxon>Pseudomonadota</taxon>
        <taxon>Gammaproteobacteria</taxon>
        <taxon>Alteromonadales</taxon>
        <taxon>Shewanellaceae</taxon>
        <taxon>Shewanella</taxon>
    </lineage>
</organism>
<reference key="1">
    <citation type="submission" date="2006-12" db="EMBL/GenBank/DDBJ databases">
        <title>Complete sequence of Shewanella amazonensis SB2B.</title>
        <authorList>
            <consortium name="US DOE Joint Genome Institute"/>
            <person name="Copeland A."/>
            <person name="Lucas S."/>
            <person name="Lapidus A."/>
            <person name="Barry K."/>
            <person name="Detter J.C."/>
            <person name="Glavina del Rio T."/>
            <person name="Hammon N."/>
            <person name="Israni S."/>
            <person name="Dalin E."/>
            <person name="Tice H."/>
            <person name="Pitluck S."/>
            <person name="Munk A.C."/>
            <person name="Brettin T."/>
            <person name="Bruce D."/>
            <person name="Han C."/>
            <person name="Tapia R."/>
            <person name="Gilna P."/>
            <person name="Schmutz J."/>
            <person name="Larimer F."/>
            <person name="Land M."/>
            <person name="Hauser L."/>
            <person name="Kyrpides N."/>
            <person name="Mikhailova N."/>
            <person name="Fredrickson J."/>
            <person name="Richardson P."/>
        </authorList>
    </citation>
    <scope>NUCLEOTIDE SEQUENCE [LARGE SCALE GENOMIC DNA]</scope>
    <source>
        <strain>ATCC BAA-1098 / SB2B</strain>
    </source>
</reference>
<comment type="function">
    <text evidence="1">Transforms N(2)-succinylglutamate into succinate and glutamate.</text>
</comment>
<comment type="catalytic activity">
    <reaction evidence="1">
        <text>N-succinyl-L-glutamate + H2O = L-glutamate + succinate</text>
        <dbReference type="Rhea" id="RHEA:15169"/>
        <dbReference type="ChEBI" id="CHEBI:15377"/>
        <dbReference type="ChEBI" id="CHEBI:29985"/>
        <dbReference type="ChEBI" id="CHEBI:30031"/>
        <dbReference type="ChEBI" id="CHEBI:58763"/>
        <dbReference type="EC" id="3.5.1.96"/>
    </reaction>
</comment>
<comment type="cofactor">
    <cofactor evidence="1">
        <name>Zn(2+)</name>
        <dbReference type="ChEBI" id="CHEBI:29105"/>
    </cofactor>
    <text evidence="1">Binds 1 zinc ion per subunit.</text>
</comment>
<comment type="pathway">
    <text evidence="1">Amino-acid degradation; L-arginine degradation via AST pathway; L-glutamate and succinate from L-arginine: step 5/5.</text>
</comment>
<comment type="similarity">
    <text evidence="1">Belongs to the AspA/AstE family. Succinylglutamate desuccinylase subfamily.</text>
</comment>
<gene>
    <name evidence="1" type="primary">astE</name>
    <name type="ordered locus">Sama_1708</name>
</gene>
<dbReference type="EC" id="3.5.1.96" evidence="1"/>
<dbReference type="EMBL" id="CP000507">
    <property type="protein sequence ID" value="ABL99914.1"/>
    <property type="molecule type" value="Genomic_DNA"/>
</dbReference>
<dbReference type="RefSeq" id="WP_011759822.1">
    <property type="nucleotide sequence ID" value="NC_008700.1"/>
</dbReference>
<dbReference type="SMR" id="A1S6A8"/>
<dbReference type="STRING" id="326297.Sama_1708"/>
<dbReference type="KEGG" id="saz:Sama_1708"/>
<dbReference type="eggNOG" id="COG2988">
    <property type="taxonomic scope" value="Bacteria"/>
</dbReference>
<dbReference type="HOGENOM" id="CLU_071608_0_0_6"/>
<dbReference type="OrthoDB" id="5290473at2"/>
<dbReference type="UniPathway" id="UPA00185">
    <property type="reaction ID" value="UER00283"/>
</dbReference>
<dbReference type="Proteomes" id="UP000009175">
    <property type="component" value="Chromosome"/>
</dbReference>
<dbReference type="GO" id="GO:0016788">
    <property type="term" value="F:hydrolase activity, acting on ester bonds"/>
    <property type="evidence" value="ECO:0007669"/>
    <property type="project" value="UniProtKB-UniRule"/>
</dbReference>
<dbReference type="GO" id="GO:0009017">
    <property type="term" value="F:succinylglutamate desuccinylase activity"/>
    <property type="evidence" value="ECO:0007669"/>
    <property type="project" value="UniProtKB-EC"/>
</dbReference>
<dbReference type="GO" id="GO:0008270">
    <property type="term" value="F:zinc ion binding"/>
    <property type="evidence" value="ECO:0007669"/>
    <property type="project" value="UniProtKB-UniRule"/>
</dbReference>
<dbReference type="GO" id="GO:0019544">
    <property type="term" value="P:arginine catabolic process to glutamate"/>
    <property type="evidence" value="ECO:0007669"/>
    <property type="project" value="UniProtKB-UniRule"/>
</dbReference>
<dbReference type="GO" id="GO:0019545">
    <property type="term" value="P:arginine catabolic process to succinate"/>
    <property type="evidence" value="ECO:0007669"/>
    <property type="project" value="UniProtKB-UniRule"/>
</dbReference>
<dbReference type="CDD" id="cd03855">
    <property type="entry name" value="M14_ASTE"/>
    <property type="match status" value="1"/>
</dbReference>
<dbReference type="Gene3D" id="3.40.630.10">
    <property type="entry name" value="Zn peptidases"/>
    <property type="match status" value="1"/>
</dbReference>
<dbReference type="HAMAP" id="MF_00767">
    <property type="entry name" value="Arg_catab_AstE"/>
    <property type="match status" value="1"/>
</dbReference>
<dbReference type="InterPro" id="IPR050178">
    <property type="entry name" value="AspA/AstE_fam"/>
</dbReference>
<dbReference type="InterPro" id="IPR055438">
    <property type="entry name" value="AstE_AspA_cat"/>
</dbReference>
<dbReference type="InterPro" id="IPR007036">
    <property type="entry name" value="Aste_AspA_hybrid_dom"/>
</dbReference>
<dbReference type="InterPro" id="IPR016681">
    <property type="entry name" value="SuccinylGlu_desuccinylase"/>
</dbReference>
<dbReference type="NCBIfam" id="TIGR03242">
    <property type="entry name" value="arg_catab_astE"/>
    <property type="match status" value="1"/>
</dbReference>
<dbReference type="NCBIfam" id="NF003706">
    <property type="entry name" value="PRK05324.1"/>
    <property type="match status" value="1"/>
</dbReference>
<dbReference type="PANTHER" id="PTHR15162">
    <property type="entry name" value="ASPARTOACYLASE"/>
    <property type="match status" value="1"/>
</dbReference>
<dbReference type="PANTHER" id="PTHR15162:SF7">
    <property type="entry name" value="SUCCINYLGLUTAMATE DESUCCINYLASE"/>
    <property type="match status" value="1"/>
</dbReference>
<dbReference type="Pfam" id="PF24827">
    <property type="entry name" value="AstE_AspA_cat"/>
    <property type="match status" value="1"/>
</dbReference>
<dbReference type="Pfam" id="PF04952">
    <property type="entry name" value="AstE_AspA_hybrid"/>
    <property type="match status" value="1"/>
</dbReference>
<dbReference type="PIRSF" id="PIRSF017020">
    <property type="entry name" value="AstE"/>
    <property type="match status" value="1"/>
</dbReference>
<dbReference type="SUPFAM" id="SSF53187">
    <property type="entry name" value="Zn-dependent exopeptidases"/>
    <property type="match status" value="1"/>
</dbReference>
<proteinExistence type="inferred from homology"/>
<sequence>MLNLLQGCKDFLHLTLSNPEHLDPIAPQPLYGHTLVSLWDTGVLVFEPVDGNSHKDIVLSSGVHGNETAPIELCNGLIQDVLEGRLQVKERVLFLIGNPAAINNGTRIVDENMNRLFSGEHSRGPGLSNPERVRAKKLETYVTRFFEKGAEKGEGRQRIHYDLHTAIRGSKHEKFAIYPYRPGRAFSGEQIMFLAASGVDTVLFHHEPTTTFSYFSSELFRADAFTIELGKVYPMGQNDMSKFANTREMFKRLICAEPLELAPFDETQVNLYQVCRVINKEVDDFEFTFSTDVENFSAFPRGHVIARQGGKDILVEQEAEAVVFPNAKVPVGQRTVIMLVPAVNPHVE</sequence>
<keyword id="KW-0056">Arginine metabolism</keyword>
<keyword id="KW-0378">Hydrolase</keyword>
<keyword id="KW-0479">Metal-binding</keyword>
<keyword id="KW-1185">Reference proteome</keyword>
<keyword id="KW-0862">Zinc</keyword>
<feature type="chain" id="PRO_1000017327" description="Succinylglutamate desuccinylase">
    <location>
        <begin position="1"/>
        <end position="348"/>
    </location>
</feature>
<feature type="active site" evidence="1">
    <location>
        <position position="228"/>
    </location>
</feature>
<feature type="binding site" evidence="1">
    <location>
        <position position="64"/>
    </location>
    <ligand>
        <name>Zn(2+)</name>
        <dbReference type="ChEBI" id="CHEBI:29105"/>
    </ligand>
</feature>
<feature type="binding site" evidence="1">
    <location>
        <position position="67"/>
    </location>
    <ligand>
        <name>Zn(2+)</name>
        <dbReference type="ChEBI" id="CHEBI:29105"/>
    </ligand>
</feature>
<feature type="binding site" evidence="1">
    <location>
        <position position="164"/>
    </location>
    <ligand>
        <name>Zn(2+)</name>
        <dbReference type="ChEBI" id="CHEBI:29105"/>
    </ligand>
</feature>
<name>ASTE_SHEAM</name>
<evidence type="ECO:0000255" key="1">
    <source>
        <dbReference type="HAMAP-Rule" id="MF_00767"/>
    </source>
</evidence>
<accession>A1S6A8</accession>